<dbReference type="EC" id="2.6.1.11"/>
<dbReference type="EMBL" id="CR382135">
    <property type="protein sequence ID" value="CAG86141.1"/>
    <property type="molecule type" value="Genomic_DNA"/>
</dbReference>
<dbReference type="RefSeq" id="XP_458070.1">
    <property type="nucleotide sequence ID" value="XM_458070.1"/>
</dbReference>
<dbReference type="SMR" id="Q6BUP9"/>
<dbReference type="FunCoup" id="Q6BUP9">
    <property type="interactions" value="293"/>
</dbReference>
<dbReference type="STRING" id="284592.Q6BUP9"/>
<dbReference type="GeneID" id="2900662"/>
<dbReference type="KEGG" id="dha:DEHA2C09042g"/>
<dbReference type="VEuPathDB" id="FungiDB:DEHA2C09042g"/>
<dbReference type="eggNOG" id="KOG1401">
    <property type="taxonomic scope" value="Eukaryota"/>
</dbReference>
<dbReference type="HOGENOM" id="CLU_016922_10_1_1"/>
<dbReference type="InParanoid" id="Q6BUP9"/>
<dbReference type="OMA" id="MVPGFKY"/>
<dbReference type="OrthoDB" id="5419315at2759"/>
<dbReference type="UniPathway" id="UPA00068">
    <property type="reaction ID" value="UER00109"/>
</dbReference>
<dbReference type="Proteomes" id="UP000000599">
    <property type="component" value="Chromosome C"/>
</dbReference>
<dbReference type="GO" id="GO:0005759">
    <property type="term" value="C:mitochondrial matrix"/>
    <property type="evidence" value="ECO:0007669"/>
    <property type="project" value="UniProtKB-SubCell"/>
</dbReference>
<dbReference type="GO" id="GO:0042802">
    <property type="term" value="F:identical protein binding"/>
    <property type="evidence" value="ECO:0007669"/>
    <property type="project" value="TreeGrafter"/>
</dbReference>
<dbReference type="GO" id="GO:0003992">
    <property type="term" value="F:N2-acetyl-L-ornithine:2-oxoglutarate 5-aminotransferase activity"/>
    <property type="evidence" value="ECO:0007669"/>
    <property type="project" value="UniProtKB-EC"/>
</dbReference>
<dbReference type="GO" id="GO:0030170">
    <property type="term" value="F:pyridoxal phosphate binding"/>
    <property type="evidence" value="ECO:0007669"/>
    <property type="project" value="InterPro"/>
</dbReference>
<dbReference type="GO" id="GO:0042450">
    <property type="term" value="P:arginine biosynthetic process via ornithine"/>
    <property type="evidence" value="ECO:0007669"/>
    <property type="project" value="EnsemblFungi"/>
</dbReference>
<dbReference type="GO" id="GO:0006526">
    <property type="term" value="P:L-arginine biosynthetic process"/>
    <property type="evidence" value="ECO:0007669"/>
    <property type="project" value="UniProtKB-UniPathway"/>
</dbReference>
<dbReference type="CDD" id="cd00610">
    <property type="entry name" value="OAT_like"/>
    <property type="match status" value="1"/>
</dbReference>
<dbReference type="FunFam" id="3.40.640.10:FF:000004">
    <property type="entry name" value="Acetylornithine aminotransferase"/>
    <property type="match status" value="1"/>
</dbReference>
<dbReference type="Gene3D" id="3.90.1150.10">
    <property type="entry name" value="Aspartate Aminotransferase, domain 1"/>
    <property type="match status" value="1"/>
</dbReference>
<dbReference type="Gene3D" id="3.40.640.10">
    <property type="entry name" value="Type I PLP-dependent aspartate aminotransferase-like (Major domain)"/>
    <property type="match status" value="1"/>
</dbReference>
<dbReference type="HAMAP" id="MF_01107">
    <property type="entry name" value="ArgD_aminotrans_3"/>
    <property type="match status" value="1"/>
</dbReference>
<dbReference type="InterPro" id="IPR004636">
    <property type="entry name" value="AcOrn/SuccOrn_fam"/>
</dbReference>
<dbReference type="InterPro" id="IPR005814">
    <property type="entry name" value="Aminotrans_3"/>
</dbReference>
<dbReference type="InterPro" id="IPR049704">
    <property type="entry name" value="Aminotrans_3_PPA_site"/>
</dbReference>
<dbReference type="InterPro" id="IPR050103">
    <property type="entry name" value="Class-III_PLP-dep_AT"/>
</dbReference>
<dbReference type="InterPro" id="IPR015424">
    <property type="entry name" value="PyrdxlP-dep_Trfase"/>
</dbReference>
<dbReference type="InterPro" id="IPR015421">
    <property type="entry name" value="PyrdxlP-dep_Trfase_major"/>
</dbReference>
<dbReference type="InterPro" id="IPR015422">
    <property type="entry name" value="PyrdxlP-dep_Trfase_small"/>
</dbReference>
<dbReference type="NCBIfam" id="TIGR00707">
    <property type="entry name" value="argD"/>
    <property type="match status" value="1"/>
</dbReference>
<dbReference type="NCBIfam" id="NF002325">
    <property type="entry name" value="PRK01278.1"/>
    <property type="match status" value="1"/>
</dbReference>
<dbReference type="PANTHER" id="PTHR11986:SF79">
    <property type="entry name" value="ACETYLORNITHINE AMINOTRANSFERASE, MITOCHONDRIAL"/>
    <property type="match status" value="1"/>
</dbReference>
<dbReference type="PANTHER" id="PTHR11986">
    <property type="entry name" value="AMINOTRANSFERASE CLASS III"/>
    <property type="match status" value="1"/>
</dbReference>
<dbReference type="Pfam" id="PF00202">
    <property type="entry name" value="Aminotran_3"/>
    <property type="match status" value="1"/>
</dbReference>
<dbReference type="PIRSF" id="PIRSF000521">
    <property type="entry name" value="Transaminase_4ab_Lys_Orn"/>
    <property type="match status" value="1"/>
</dbReference>
<dbReference type="SUPFAM" id="SSF53383">
    <property type="entry name" value="PLP-dependent transferases"/>
    <property type="match status" value="1"/>
</dbReference>
<dbReference type="PROSITE" id="PS00600">
    <property type="entry name" value="AA_TRANSFER_CLASS_3"/>
    <property type="match status" value="1"/>
</dbReference>
<sequence length="466" mass="50653">MLRNIPRSLRKDGGKRIPGLISRVANQFSTTSSLLNKKSIPDAPEDSHTGQYINTITKPFTVTTYARPNVVMTHGKGSYLYDLENRQYLDFSAGIAVTCLGHSHSKITEIISDQAATLMHCSNLYHNLYAGELANKLVTNTINSGGMKEAQRVFLCNSGTEANEAALKFARKYGKSFSDDKYEMITFKNSFHGRTMGALSVTPNEKYQKPFAPLVPGVKIAEPNDISSVEKLISKEKTCAVIIEPIQGEGGVNAIDAEFLVSLKKLCVDNEVVLIYDEIQCGLGRSGKLWAHCNLPEEAHPDILTMAKALGNGFPIGAVMVSDKIEKVLKVGDHGTTYGGNPLGSKIGSYVVDQVSDKEFLLEVEEKSEKFTKGLSKIANKHPDHIGEVKGKGLLLGLQLKGNLDVGDVVAKCRENGLLVISAGMNVLRIVPALNIPNEAIEEGLDVLDKCIDELSKDPKSSFSQS</sequence>
<reference key="1">
    <citation type="journal article" date="2004" name="Nature">
        <title>Genome evolution in yeasts.</title>
        <authorList>
            <person name="Dujon B."/>
            <person name="Sherman D."/>
            <person name="Fischer G."/>
            <person name="Durrens P."/>
            <person name="Casaregola S."/>
            <person name="Lafontaine I."/>
            <person name="de Montigny J."/>
            <person name="Marck C."/>
            <person name="Neuveglise C."/>
            <person name="Talla E."/>
            <person name="Goffard N."/>
            <person name="Frangeul L."/>
            <person name="Aigle M."/>
            <person name="Anthouard V."/>
            <person name="Babour A."/>
            <person name="Barbe V."/>
            <person name="Barnay S."/>
            <person name="Blanchin S."/>
            <person name="Beckerich J.-M."/>
            <person name="Beyne E."/>
            <person name="Bleykasten C."/>
            <person name="Boisrame A."/>
            <person name="Boyer J."/>
            <person name="Cattolico L."/>
            <person name="Confanioleri F."/>
            <person name="de Daruvar A."/>
            <person name="Despons L."/>
            <person name="Fabre E."/>
            <person name="Fairhead C."/>
            <person name="Ferry-Dumazet H."/>
            <person name="Groppi A."/>
            <person name="Hantraye F."/>
            <person name="Hennequin C."/>
            <person name="Jauniaux N."/>
            <person name="Joyet P."/>
            <person name="Kachouri R."/>
            <person name="Kerrest A."/>
            <person name="Koszul R."/>
            <person name="Lemaire M."/>
            <person name="Lesur I."/>
            <person name="Ma L."/>
            <person name="Muller H."/>
            <person name="Nicaud J.-M."/>
            <person name="Nikolski M."/>
            <person name="Oztas S."/>
            <person name="Ozier-Kalogeropoulos O."/>
            <person name="Pellenz S."/>
            <person name="Potier S."/>
            <person name="Richard G.-F."/>
            <person name="Straub M.-L."/>
            <person name="Suleau A."/>
            <person name="Swennen D."/>
            <person name="Tekaia F."/>
            <person name="Wesolowski-Louvel M."/>
            <person name="Westhof E."/>
            <person name="Wirth B."/>
            <person name="Zeniou-Meyer M."/>
            <person name="Zivanovic Y."/>
            <person name="Bolotin-Fukuhara M."/>
            <person name="Thierry A."/>
            <person name="Bouchier C."/>
            <person name="Caudron B."/>
            <person name="Scarpelli C."/>
            <person name="Gaillardin C."/>
            <person name="Weissenbach J."/>
            <person name="Wincker P."/>
            <person name="Souciet J.-L."/>
        </authorList>
    </citation>
    <scope>NUCLEOTIDE SEQUENCE [LARGE SCALE GENOMIC DNA]</scope>
    <source>
        <strain>ATCC 36239 / CBS 767 / BCRC 21394 / JCM 1990 / NBRC 0083 / IGC 2968</strain>
    </source>
</reference>
<gene>
    <name type="primary">ARG8</name>
    <name type="ordered locus">DEHA2C09042g</name>
</gene>
<accession>Q6BUP9</accession>
<feature type="transit peptide" description="Mitochondrion" evidence="2">
    <location>
        <begin position="1"/>
        <end status="unknown"/>
    </location>
</feature>
<feature type="chain" id="PRO_0000002078" description="Acetylornithine aminotransferase, mitochondrial">
    <location>
        <begin status="unknown"/>
        <end position="466"/>
    </location>
</feature>
<feature type="modified residue" description="N6-(pyridoxal phosphate)lysine" evidence="1">
    <location>
        <position position="308"/>
    </location>
</feature>
<organism>
    <name type="scientific">Debaryomyces hansenii (strain ATCC 36239 / CBS 767 / BCRC 21394 / JCM 1990 / NBRC 0083 / IGC 2968)</name>
    <name type="common">Yeast</name>
    <name type="synonym">Torulaspora hansenii</name>
    <dbReference type="NCBI Taxonomy" id="284592"/>
    <lineage>
        <taxon>Eukaryota</taxon>
        <taxon>Fungi</taxon>
        <taxon>Dikarya</taxon>
        <taxon>Ascomycota</taxon>
        <taxon>Saccharomycotina</taxon>
        <taxon>Pichiomycetes</taxon>
        <taxon>Debaryomycetaceae</taxon>
        <taxon>Debaryomyces</taxon>
    </lineage>
</organism>
<proteinExistence type="inferred from homology"/>
<keyword id="KW-0028">Amino-acid biosynthesis</keyword>
<keyword id="KW-0032">Aminotransferase</keyword>
<keyword id="KW-0055">Arginine biosynthesis</keyword>
<keyword id="KW-0496">Mitochondrion</keyword>
<keyword id="KW-0663">Pyridoxal phosphate</keyword>
<keyword id="KW-1185">Reference proteome</keyword>
<keyword id="KW-0808">Transferase</keyword>
<keyword id="KW-0809">Transit peptide</keyword>
<evidence type="ECO:0000250" key="1"/>
<evidence type="ECO:0000255" key="2"/>
<evidence type="ECO:0000305" key="3"/>
<protein>
    <recommendedName>
        <fullName>Acetylornithine aminotransferase, mitochondrial</fullName>
        <shortName>ACOAT</shortName>
        <ecNumber>2.6.1.11</ecNumber>
    </recommendedName>
</protein>
<comment type="catalytic activity">
    <reaction>
        <text>N(2)-acetyl-L-ornithine + 2-oxoglutarate = N-acetyl-L-glutamate 5-semialdehyde + L-glutamate</text>
        <dbReference type="Rhea" id="RHEA:18049"/>
        <dbReference type="ChEBI" id="CHEBI:16810"/>
        <dbReference type="ChEBI" id="CHEBI:29123"/>
        <dbReference type="ChEBI" id="CHEBI:29985"/>
        <dbReference type="ChEBI" id="CHEBI:57805"/>
        <dbReference type="EC" id="2.6.1.11"/>
    </reaction>
</comment>
<comment type="cofactor">
    <cofactor evidence="1">
        <name>pyridoxal 5'-phosphate</name>
        <dbReference type="ChEBI" id="CHEBI:597326"/>
    </cofactor>
</comment>
<comment type="pathway">
    <text>Amino-acid biosynthesis; L-arginine biosynthesis; N(2)-acetyl-L-ornithine from L-glutamate: step 4/4.</text>
</comment>
<comment type="subcellular location">
    <subcellularLocation>
        <location evidence="1">Mitochondrion matrix</location>
    </subcellularLocation>
</comment>
<comment type="similarity">
    <text evidence="3">Belongs to the class-III pyridoxal-phosphate-dependent aminotransferase family.</text>
</comment>
<name>ARGD_DEBHA</name>